<proteinExistence type="evidence at transcript level"/>
<reference key="1">
    <citation type="submission" date="2004-11" db="EMBL/GenBank/DDBJ databases">
        <authorList>
            <consortium name="The German cDNA consortium"/>
        </authorList>
    </citation>
    <scope>NUCLEOTIDE SEQUENCE [LARGE SCALE MRNA]</scope>
    <source>
        <tissue>Brain cortex</tissue>
    </source>
</reference>
<feature type="initiator methionine" description="Removed" evidence="2">
    <location>
        <position position="1"/>
    </location>
</feature>
<feature type="chain" id="PRO_0000285752" description="Phosphatidylinositol 5-phosphate 4-kinase type-2 gamma">
    <location>
        <begin position="2"/>
        <end position="421"/>
    </location>
</feature>
<feature type="domain" description="PIPK" evidence="3">
    <location>
        <begin position="43"/>
        <end position="420"/>
    </location>
</feature>
<feature type="region of interest" description="Required for interaction with PIP5K1A" evidence="2">
    <location>
        <begin position="69"/>
        <end position="75"/>
    </location>
</feature>
<feature type="modified residue" description="N-acetylalanine" evidence="2">
    <location>
        <position position="2"/>
    </location>
</feature>
<feature type="modified residue" description="Phosphoserine" evidence="2">
    <location>
        <position position="26"/>
    </location>
</feature>
<feature type="modified residue" description="Phosphoserine" evidence="2">
    <location>
        <position position="349"/>
    </location>
</feature>
<protein>
    <recommendedName>
        <fullName evidence="4">Phosphatidylinositol 5-phosphate 4-kinase type-2 gamma</fullName>
        <ecNumber evidence="2">2.7.1.149</ecNumber>
    </recommendedName>
    <alternativeName>
        <fullName>Phosphatidylinositol 5-phosphate 4-kinase type II gamma</fullName>
        <shortName>PI(5)P 4-kinase type II gamma</shortName>
        <shortName>PIP4KII-gamma</shortName>
    </alternativeName>
</protein>
<evidence type="ECO:0000250" key="1">
    <source>
        <dbReference type="UniProtKB" id="O88370"/>
    </source>
</evidence>
<evidence type="ECO:0000250" key="2">
    <source>
        <dbReference type="UniProtKB" id="Q8TBX8"/>
    </source>
</evidence>
<evidence type="ECO:0000255" key="3">
    <source>
        <dbReference type="PROSITE-ProRule" id="PRU00781"/>
    </source>
</evidence>
<evidence type="ECO:0000305" key="4"/>
<organism>
    <name type="scientific">Pongo abelii</name>
    <name type="common">Sumatran orangutan</name>
    <name type="synonym">Pongo pygmaeus abelii</name>
    <dbReference type="NCBI Taxonomy" id="9601"/>
    <lineage>
        <taxon>Eukaryota</taxon>
        <taxon>Metazoa</taxon>
        <taxon>Chordata</taxon>
        <taxon>Craniata</taxon>
        <taxon>Vertebrata</taxon>
        <taxon>Euteleostomi</taxon>
        <taxon>Mammalia</taxon>
        <taxon>Eutheria</taxon>
        <taxon>Euarchontoglires</taxon>
        <taxon>Primates</taxon>
        <taxon>Haplorrhini</taxon>
        <taxon>Catarrhini</taxon>
        <taxon>Hominidae</taxon>
        <taxon>Pongo</taxon>
    </lineage>
</organism>
<keyword id="KW-0007">Acetylation</keyword>
<keyword id="KW-0067">ATP-binding</keyword>
<keyword id="KW-0963">Cytoplasm</keyword>
<keyword id="KW-0256">Endoplasmic reticulum</keyword>
<keyword id="KW-0418">Kinase</keyword>
<keyword id="KW-0443">Lipid metabolism</keyword>
<keyword id="KW-0547">Nucleotide-binding</keyword>
<keyword id="KW-0597">Phosphoprotein</keyword>
<keyword id="KW-1185">Reference proteome</keyword>
<keyword id="KW-0808">Transferase</keyword>
<dbReference type="EC" id="2.7.1.149" evidence="2"/>
<dbReference type="EMBL" id="CR861368">
    <property type="protein sequence ID" value="CAH93428.1"/>
    <property type="molecule type" value="mRNA"/>
</dbReference>
<dbReference type="RefSeq" id="NP_001127008.1">
    <property type="nucleotide sequence ID" value="NM_001133536.1"/>
</dbReference>
<dbReference type="SMR" id="Q5R488"/>
<dbReference type="FunCoup" id="Q5R488">
    <property type="interactions" value="2795"/>
</dbReference>
<dbReference type="STRING" id="9601.ENSPPYP00000005349"/>
<dbReference type="GeneID" id="100174032"/>
<dbReference type="KEGG" id="pon:100174032"/>
<dbReference type="CTD" id="79837"/>
<dbReference type="eggNOG" id="KOG0229">
    <property type="taxonomic scope" value="Eukaryota"/>
</dbReference>
<dbReference type="InParanoid" id="Q5R488"/>
<dbReference type="OrthoDB" id="20783at2759"/>
<dbReference type="Proteomes" id="UP000001595">
    <property type="component" value="Unplaced"/>
</dbReference>
<dbReference type="GO" id="GO:0005783">
    <property type="term" value="C:endoplasmic reticulum"/>
    <property type="evidence" value="ECO:0007669"/>
    <property type="project" value="UniProtKB-SubCell"/>
</dbReference>
<dbReference type="GO" id="GO:0005886">
    <property type="term" value="C:plasma membrane"/>
    <property type="evidence" value="ECO:0007669"/>
    <property type="project" value="TreeGrafter"/>
</dbReference>
<dbReference type="GO" id="GO:0016308">
    <property type="term" value="F:1-phosphatidylinositol-4-phosphate 5-kinase activity"/>
    <property type="evidence" value="ECO:0000250"/>
    <property type="project" value="UniProtKB"/>
</dbReference>
<dbReference type="GO" id="GO:0016309">
    <property type="term" value="F:1-phosphatidylinositol-5-phosphate 4-kinase activity"/>
    <property type="evidence" value="ECO:0007669"/>
    <property type="project" value="UniProtKB-EC"/>
</dbReference>
<dbReference type="GO" id="GO:0005524">
    <property type="term" value="F:ATP binding"/>
    <property type="evidence" value="ECO:0007669"/>
    <property type="project" value="UniProtKB-KW"/>
</dbReference>
<dbReference type="GO" id="GO:1902635">
    <property type="term" value="P:1-phosphatidyl-1D-myo-inositol 4,5-bisphosphate biosynthetic process"/>
    <property type="evidence" value="ECO:0000250"/>
    <property type="project" value="UniProtKB"/>
</dbReference>
<dbReference type="GO" id="GO:0046627">
    <property type="term" value="P:negative regulation of insulin receptor signaling pathway"/>
    <property type="evidence" value="ECO:0000250"/>
    <property type="project" value="UniProtKB"/>
</dbReference>
<dbReference type="CDD" id="cd17311">
    <property type="entry name" value="PIPKc_PIP5K2C"/>
    <property type="match status" value="1"/>
</dbReference>
<dbReference type="FunFam" id="3.30.800.10:FF:000002">
    <property type="entry name" value="Phosphatidylinositol 5-phosphate 4-kinase type-2 beta"/>
    <property type="match status" value="1"/>
</dbReference>
<dbReference type="FunFam" id="3.30.810.10:FF:000003">
    <property type="entry name" value="Phosphatidylinositol 5-phosphate 4-kinase type-2 beta"/>
    <property type="match status" value="1"/>
</dbReference>
<dbReference type="FunFam" id="3.30.810.10:FF:000004">
    <property type="entry name" value="Phosphatidylinositol 5-phosphate 4-kinase type-2 beta"/>
    <property type="match status" value="1"/>
</dbReference>
<dbReference type="Gene3D" id="3.30.810.10">
    <property type="entry name" value="2-Layer Sandwich"/>
    <property type="match status" value="2"/>
</dbReference>
<dbReference type="Gene3D" id="3.30.800.10">
    <property type="entry name" value="Phosphatidylinositol Phosphate Kinase II Beta"/>
    <property type="match status" value="1"/>
</dbReference>
<dbReference type="InterPro" id="IPR027483">
    <property type="entry name" value="PInositol-4-P-4/5-kinase_C_sf"/>
</dbReference>
<dbReference type="InterPro" id="IPR002498">
    <property type="entry name" value="PInositol-4-P-4/5-kinase_core"/>
</dbReference>
<dbReference type="InterPro" id="IPR027484">
    <property type="entry name" value="PInositol-4-P-5-kinase_N"/>
</dbReference>
<dbReference type="InterPro" id="IPR023610">
    <property type="entry name" value="PInositol-4/5-P-5/4-kinase"/>
</dbReference>
<dbReference type="PANTHER" id="PTHR23086:SF35">
    <property type="entry name" value="PHOSPHATIDYLINOSITOL 5-PHOSPHATE 4-KINASE TYPE-2 GAMMA"/>
    <property type="match status" value="1"/>
</dbReference>
<dbReference type="PANTHER" id="PTHR23086">
    <property type="entry name" value="PHOSPHATIDYLINOSITOL-4-PHOSPHATE 5-KINASE"/>
    <property type="match status" value="1"/>
</dbReference>
<dbReference type="Pfam" id="PF01504">
    <property type="entry name" value="PIP5K"/>
    <property type="match status" value="1"/>
</dbReference>
<dbReference type="SMART" id="SM00330">
    <property type="entry name" value="PIPKc"/>
    <property type="match status" value="1"/>
</dbReference>
<dbReference type="SUPFAM" id="SSF56104">
    <property type="entry name" value="SAICAR synthase-like"/>
    <property type="match status" value="1"/>
</dbReference>
<dbReference type="PROSITE" id="PS51455">
    <property type="entry name" value="PIPK"/>
    <property type="match status" value="1"/>
</dbReference>
<sequence length="421" mass="47235">MASSSVPPATVSAATTGPGPGFGFASKTKKKHFVQQEVKVFRAADPLVGVFLWGVAHSINELSQVPPPVMLLPDDFKASSKIKVNNHLFHRENLPSHFKFKEYCPQVFRNLRDRFGIDDQDYLVSLTRNPPSESEGSDGRFLICYDRTLVIKEVSSEDIADMHSNLSNYHQYIVKCHGNTLLPQFLGMYRVSVDNEDSYMLVMRNMFSHRLPVHRKYDLKGSLVSREASDKEKVKELPTLKGMDFLNKNQKVYIGEDEKKIFLEKLKRDVEFLVQLKIMDYSLLLGIHDIIRGSEPEEEGPVREDESEVDGDCSLTGPPALVGSYGTSPEGIGGYIHSHRPLGPGEFESFIDVHAIRSAEGAPQKEVYFMGLIDILTQYDAKKKAAHAAKTVKHGAGAEISTVHPEQYAKRFLDFITNIFA</sequence>
<accession>Q5R488</accession>
<comment type="function">
    <text evidence="2">Phosphatidylinositol 5-phosphate 4-kinase with low enzymatic activity. May be a GTP sensor, has higher GTP-dependent kinase activity than ATP-dependent kinase activity. PIP4Ks negatively regulate insulin signaling through a catalytic-independent mechanism. They interact with PIP5Ks and suppress PIP5K-mediated PtdIns(4,5)P2 synthesis and insulin-dependent conversion to PtdIns(3,4,5)P3.</text>
</comment>
<comment type="catalytic activity">
    <reaction evidence="2">
        <text>a 1,2-diacyl-sn-glycero-3-phospho-(1D-myo-inositol-5-phosphate) + ATP = a 1,2-diacyl-sn-glycero-3-phospho-(1D-myo-inositol-4,5-bisphosphate) + ADP + H(+)</text>
        <dbReference type="Rhea" id="RHEA:12280"/>
        <dbReference type="ChEBI" id="CHEBI:15378"/>
        <dbReference type="ChEBI" id="CHEBI:30616"/>
        <dbReference type="ChEBI" id="CHEBI:57795"/>
        <dbReference type="ChEBI" id="CHEBI:58456"/>
        <dbReference type="ChEBI" id="CHEBI:456216"/>
        <dbReference type="EC" id="2.7.1.149"/>
    </reaction>
    <physiologicalReaction direction="left-to-right" evidence="2">
        <dbReference type="Rhea" id="RHEA:12281"/>
    </physiologicalReaction>
</comment>
<comment type="catalytic activity">
    <reaction evidence="2">
        <text>1,2-dihexadecanoyl-sn-glycero-3-phospho-(1D-myo-inositol-5-phosphate) + ATP = 1,2-dihexadecanoyl-sn-glycero-3-phospho-(1D-myo-inositol-4,5-bisphosphate) + ADP + H(+)</text>
        <dbReference type="Rhea" id="RHEA:55992"/>
        <dbReference type="ChEBI" id="CHEBI:15378"/>
        <dbReference type="ChEBI" id="CHEBI:30616"/>
        <dbReference type="ChEBI" id="CHEBI:83423"/>
        <dbReference type="ChEBI" id="CHEBI:84968"/>
        <dbReference type="ChEBI" id="CHEBI:456216"/>
    </reaction>
    <physiologicalReaction direction="left-to-right" evidence="2">
        <dbReference type="Rhea" id="RHEA:55993"/>
    </physiologicalReaction>
</comment>
<comment type="catalytic activity">
    <reaction evidence="2">
        <text>1,2-dihexadecanoyl-sn-glycero-3-phospho-(1D-myo-inositol-5-phosphate) + GTP = 1,2-dihexadecanoyl-sn-glycero-3-phospho-(1D-myo-inositol-4,5-bisphosphate) + GDP + H(+)</text>
        <dbReference type="Rhea" id="RHEA:55964"/>
        <dbReference type="ChEBI" id="CHEBI:15378"/>
        <dbReference type="ChEBI" id="CHEBI:37565"/>
        <dbReference type="ChEBI" id="CHEBI:58189"/>
        <dbReference type="ChEBI" id="CHEBI:83423"/>
        <dbReference type="ChEBI" id="CHEBI:84968"/>
    </reaction>
    <physiologicalReaction direction="left-to-right" evidence="2">
        <dbReference type="Rhea" id="RHEA:55965"/>
    </physiologicalReaction>
</comment>
<comment type="subunit">
    <text evidence="2">Interacts with PIP5K1A; the interaction inhibits PIP5K1A kinase activity.</text>
</comment>
<comment type="subcellular location">
    <subcellularLocation>
        <location evidence="1">Endoplasmic reticulum</location>
    </subcellularLocation>
    <subcellularLocation>
        <location evidence="1">Cytoplasm</location>
    </subcellularLocation>
</comment>
<comment type="PTM">
    <text evidence="1">Phosphorylated, phosphorylation is induced by EGF.</text>
</comment>
<name>PI42C_PONAB</name>
<gene>
    <name type="primary">PIP4K2C</name>
    <name type="synonym">PIP5K2C</name>
</gene>